<dbReference type="EC" id="1.1.1.162"/>
<dbReference type="EC" id="1.1.1.10"/>
<dbReference type="EMBL" id="AB049356">
    <property type="protein sequence ID" value="BAB97210.1"/>
    <property type="molecule type" value="mRNA"/>
</dbReference>
<dbReference type="RefSeq" id="NP_989556.1">
    <property type="nucleotide sequence ID" value="NM_204225.1"/>
</dbReference>
<dbReference type="SMR" id="Q8JIS3"/>
<dbReference type="FunCoup" id="Q8JIS3">
    <property type="interactions" value="1236"/>
</dbReference>
<dbReference type="STRING" id="9031.ENSGALP00000004484"/>
<dbReference type="PaxDb" id="9031-ENSGALP00000004484"/>
<dbReference type="GeneID" id="374066"/>
<dbReference type="KEGG" id="gga:374066"/>
<dbReference type="CTD" id="51181"/>
<dbReference type="VEuPathDB" id="HostDB:geneid_374066"/>
<dbReference type="eggNOG" id="KOG1207">
    <property type="taxonomic scope" value="Eukaryota"/>
</dbReference>
<dbReference type="InParanoid" id="Q8JIS3"/>
<dbReference type="OrthoDB" id="1393670at2759"/>
<dbReference type="PhylomeDB" id="Q8JIS3"/>
<dbReference type="Reactome" id="R-GGA-5661270">
    <property type="pathway name" value="Formation of xylulose-5-phosphate"/>
</dbReference>
<dbReference type="SABIO-RK" id="Q8JIS3"/>
<dbReference type="PRO" id="PR:Q8JIS3"/>
<dbReference type="Proteomes" id="UP000000539">
    <property type="component" value="Chromosome 18"/>
</dbReference>
<dbReference type="Bgee" id="ENSGALG00000002849">
    <property type="expression patterns" value="Expressed in kidney and 13 other cell types or tissues"/>
</dbReference>
<dbReference type="GO" id="GO:0005737">
    <property type="term" value="C:cytoplasm"/>
    <property type="evidence" value="ECO:0007669"/>
    <property type="project" value="UniProtKB-SubCell"/>
</dbReference>
<dbReference type="GO" id="GO:0004090">
    <property type="term" value="F:carbonyl reductase (NADPH) activity"/>
    <property type="evidence" value="ECO:0000318"/>
    <property type="project" value="GO_Central"/>
</dbReference>
<dbReference type="GO" id="GO:0047880">
    <property type="term" value="F:erythrulose reductase activity"/>
    <property type="evidence" value="ECO:0007669"/>
    <property type="project" value="UniProtKB-EC"/>
</dbReference>
<dbReference type="GO" id="GO:0050038">
    <property type="term" value="F:L-xylulose reductase (NADPH) activity"/>
    <property type="evidence" value="ECO:0000318"/>
    <property type="project" value="GO_Central"/>
</dbReference>
<dbReference type="GO" id="GO:0042732">
    <property type="term" value="P:D-xylose metabolic process"/>
    <property type="evidence" value="ECO:0007669"/>
    <property type="project" value="UniProtKB-KW"/>
</dbReference>
<dbReference type="GO" id="GO:0006006">
    <property type="term" value="P:glucose metabolic process"/>
    <property type="evidence" value="ECO:0000318"/>
    <property type="project" value="GO_Central"/>
</dbReference>
<dbReference type="GO" id="GO:0005997">
    <property type="term" value="P:xylulose metabolic process"/>
    <property type="evidence" value="ECO:0000318"/>
    <property type="project" value="GO_Central"/>
</dbReference>
<dbReference type="CDD" id="cd05351">
    <property type="entry name" value="XR_like_SDR_c"/>
    <property type="match status" value="1"/>
</dbReference>
<dbReference type="FunFam" id="3.40.50.720:FF:000214">
    <property type="entry name" value="L-xylulose reductase"/>
    <property type="match status" value="1"/>
</dbReference>
<dbReference type="Gene3D" id="3.40.50.720">
    <property type="entry name" value="NAD(P)-binding Rossmann-like Domain"/>
    <property type="match status" value="1"/>
</dbReference>
<dbReference type="InterPro" id="IPR051737">
    <property type="entry name" value="L-xylulose/Carbonyl_redctase"/>
</dbReference>
<dbReference type="InterPro" id="IPR036291">
    <property type="entry name" value="NAD(P)-bd_dom_sf"/>
</dbReference>
<dbReference type="InterPro" id="IPR020904">
    <property type="entry name" value="Sc_DH/Rdtase_CS"/>
</dbReference>
<dbReference type="InterPro" id="IPR002347">
    <property type="entry name" value="SDR_fam"/>
</dbReference>
<dbReference type="PANTHER" id="PTHR44252">
    <property type="entry name" value="D-ERYTHRULOSE REDUCTASE"/>
    <property type="match status" value="1"/>
</dbReference>
<dbReference type="PANTHER" id="PTHR44252:SF3">
    <property type="entry name" value="D-ERYTHRULOSE REDUCTASE-RELATED"/>
    <property type="match status" value="1"/>
</dbReference>
<dbReference type="Pfam" id="PF13561">
    <property type="entry name" value="adh_short_C2"/>
    <property type="match status" value="1"/>
</dbReference>
<dbReference type="PRINTS" id="PR00081">
    <property type="entry name" value="GDHRDH"/>
</dbReference>
<dbReference type="PRINTS" id="PR00080">
    <property type="entry name" value="SDRFAMILY"/>
</dbReference>
<dbReference type="SUPFAM" id="SSF51735">
    <property type="entry name" value="NAD(P)-binding Rossmann-fold domains"/>
    <property type="match status" value="1"/>
</dbReference>
<dbReference type="PROSITE" id="PS00061">
    <property type="entry name" value="ADH_SHORT"/>
    <property type="match status" value="1"/>
</dbReference>
<comment type="function">
    <text>Catalyzes the reduction of D-erythrulose to D-threitol with the concomitant oxidation of NAD(P)H to NAD(P)(+). NADH is less effective than NADPH. May also catalyze the reduction of L-xylulose.</text>
</comment>
<comment type="catalytic activity">
    <reaction>
        <text>D-threitol + NADP(+) = D-erythrulose + NADPH + H(+)</text>
        <dbReference type="Rhea" id="RHEA:18005"/>
        <dbReference type="ChEBI" id="CHEBI:15378"/>
        <dbReference type="ChEBI" id="CHEBI:16023"/>
        <dbReference type="ChEBI" id="CHEBI:48300"/>
        <dbReference type="ChEBI" id="CHEBI:57783"/>
        <dbReference type="ChEBI" id="CHEBI:58349"/>
        <dbReference type="EC" id="1.1.1.162"/>
    </reaction>
</comment>
<comment type="catalytic activity">
    <reaction>
        <text>xylitol + NADP(+) = L-xylulose + NADPH + H(+)</text>
        <dbReference type="Rhea" id="RHEA:17025"/>
        <dbReference type="ChEBI" id="CHEBI:15378"/>
        <dbReference type="ChEBI" id="CHEBI:17151"/>
        <dbReference type="ChEBI" id="CHEBI:17399"/>
        <dbReference type="ChEBI" id="CHEBI:57783"/>
        <dbReference type="ChEBI" id="CHEBI:58349"/>
        <dbReference type="EC" id="1.1.1.10"/>
    </reaction>
</comment>
<comment type="biophysicochemical properties">
    <kinetics>
        <KM evidence="4">0.38 mM for D-erythrulose</KM>
        <KM evidence="4">67 uM for NADH</KM>
        <KM evidence="4">7.9 uM for NADPH</KM>
    </kinetics>
</comment>
<comment type="subunit">
    <text evidence="4">Homotetramer.</text>
</comment>
<comment type="subcellular location">
    <subcellularLocation>
        <location>Cytoplasm</location>
    </subcellularLocation>
</comment>
<comment type="tissue specificity">
    <text evidence="3">Highly expressed in kidney, and also found in high amounts in liver and testis. Low expression seen in all other tissues tested.</text>
</comment>
<comment type="PTM">
    <text>The N-terminus is blocked.</text>
</comment>
<comment type="similarity">
    <text evidence="5">Belongs to the short-chain dehydrogenases/reductases (SDR) family.</text>
</comment>
<accession>Q8JIS3</accession>
<name>DER_CHICK</name>
<proteinExistence type="evidence at protein level"/>
<protein>
    <recommendedName>
        <fullName>D-erythrulose reductase</fullName>
        <ecNumber>1.1.1.162</ecNumber>
    </recommendedName>
    <alternativeName>
        <fullName>Probable L-xylulose reductase</fullName>
        <shortName>XR</shortName>
        <ecNumber>1.1.1.10</ecNumber>
    </alternativeName>
</protein>
<keyword id="KW-0119">Carbohydrate metabolism</keyword>
<keyword id="KW-0963">Cytoplasm</keyword>
<keyword id="KW-0903">Direct protein sequencing</keyword>
<keyword id="KW-0521">NADP</keyword>
<keyword id="KW-0560">Oxidoreductase</keyword>
<keyword id="KW-1185">Reference proteome</keyword>
<keyword id="KW-0859">Xylose metabolism</keyword>
<evidence type="ECO:0000250" key="1"/>
<evidence type="ECO:0000255" key="2">
    <source>
        <dbReference type="PROSITE-ProRule" id="PRU10001"/>
    </source>
</evidence>
<evidence type="ECO:0000269" key="3">
    <source>
    </source>
</evidence>
<evidence type="ECO:0000269" key="4">
    <source>
    </source>
</evidence>
<evidence type="ECO:0000305" key="5"/>
<reference key="1">
    <citation type="journal article" date="2002" name="Protein Eng.">
        <title>Cloning and sequence analysis of D-erythrulose reductase from chicken: its close structural relation to tetrameric carbonyl reductases.</title>
        <authorList>
            <person name="Maeda M."/>
            <person name="Kaku H."/>
            <person name="Shimada M."/>
            <person name="Nishioka T."/>
        </authorList>
    </citation>
    <scope>NUCLEOTIDE SEQUENCE [MRNA]</scope>
    <scope>PROTEIN SEQUENCE OF 32-56; 175-193 AND 211-225</scope>
    <scope>TISSUE SPECIFICITY</scope>
    <scope>BLOCKAGE OF N-TERMINUS</scope>
    <source>
        <tissue>Liver</tissue>
    </source>
</reference>
<reference key="2">
    <citation type="journal article" date="1980" name="J. Biochem.">
        <title>Studies on D-tetrose metabolism. Crystallization and properties of D-erythrulose reductase from chicken liver.</title>
        <authorList>
            <person name="Uehara K."/>
            <person name="Mannen S."/>
            <person name="Hosomi S."/>
            <person name="Miyashita T."/>
        </authorList>
    </citation>
    <scope>CHARACTERIZATION</scope>
    <scope>BIOPHYSICOCHEMICAL PROPERTIES</scope>
    <scope>SUBUNIT</scope>
    <source>
        <tissue>Liver</tissue>
    </source>
</reference>
<feature type="chain" id="PRO_0000054566" description="D-erythrulose reductase">
    <location>
        <begin position="1"/>
        <end position="246"/>
    </location>
</feature>
<feature type="active site" description="Proton acceptor" evidence="2">
    <location>
        <position position="151"/>
    </location>
</feature>
<feature type="binding site" evidence="1">
    <location>
        <begin position="13"/>
        <end position="41"/>
    </location>
    <ligand>
        <name>NADP(+)</name>
        <dbReference type="ChEBI" id="CHEBI:58349"/>
    </ligand>
</feature>
<feature type="binding site" evidence="1">
    <location>
        <position position="138"/>
    </location>
    <ligand>
        <name>substrate</name>
    </ligand>
</feature>
<feature type="binding site" evidence="1">
    <location>
        <position position="155"/>
    </location>
    <ligand>
        <name>NADP(+)</name>
        <dbReference type="ChEBI" id="CHEBI:58349"/>
    </ligand>
</feature>
<organism>
    <name type="scientific">Gallus gallus</name>
    <name type="common">Chicken</name>
    <dbReference type="NCBI Taxonomy" id="9031"/>
    <lineage>
        <taxon>Eukaryota</taxon>
        <taxon>Metazoa</taxon>
        <taxon>Chordata</taxon>
        <taxon>Craniata</taxon>
        <taxon>Vertebrata</taxon>
        <taxon>Euteleostomi</taxon>
        <taxon>Archelosauria</taxon>
        <taxon>Archosauria</taxon>
        <taxon>Dinosauria</taxon>
        <taxon>Saurischia</taxon>
        <taxon>Theropoda</taxon>
        <taxon>Coelurosauria</taxon>
        <taxon>Aves</taxon>
        <taxon>Neognathae</taxon>
        <taxon>Galloanserae</taxon>
        <taxon>Galliformes</taxon>
        <taxon>Phasianidae</taxon>
        <taxon>Phasianinae</taxon>
        <taxon>Gallus</taxon>
    </lineage>
</organism>
<sequence>MEPDLSFRGRRALVTGAGKGIGRAVAVALCKAGARVTALSRTAADLESLVRECPGIEPLCLDLADWDATEAAVGAAGPFELLVNNAAVAMLQPFLQVTREAVERSFDVNFRAVLHVSQIVARQMIAQGLPGAIVNVSSQASQRALRDHAVYCSTKSALDMLSKVMAMELGPHKIRVNTVNPTVVMTDMGRINWSDPQKSAAMINRIPLGKFAEVDDVVNSILFLLSDKSAMTTGSSLMVDGGFLVS</sequence>
<gene>
    <name type="primary">DER</name>
</gene>